<proteinExistence type="inferred from homology"/>
<dbReference type="EC" id="2.8.1.13" evidence="1"/>
<dbReference type="EMBL" id="CP000088">
    <property type="protein sequence ID" value="AAZ54635.1"/>
    <property type="molecule type" value="Genomic_DNA"/>
</dbReference>
<dbReference type="RefSeq" id="WP_011291044.1">
    <property type="nucleotide sequence ID" value="NC_007333.1"/>
</dbReference>
<dbReference type="SMR" id="Q47SD2"/>
<dbReference type="STRING" id="269800.Tfu_0597"/>
<dbReference type="KEGG" id="tfu:Tfu_0597"/>
<dbReference type="eggNOG" id="COG0482">
    <property type="taxonomic scope" value="Bacteria"/>
</dbReference>
<dbReference type="HOGENOM" id="CLU_035188_0_2_11"/>
<dbReference type="GO" id="GO:0005737">
    <property type="term" value="C:cytoplasm"/>
    <property type="evidence" value="ECO:0007669"/>
    <property type="project" value="UniProtKB-SubCell"/>
</dbReference>
<dbReference type="GO" id="GO:0005524">
    <property type="term" value="F:ATP binding"/>
    <property type="evidence" value="ECO:0007669"/>
    <property type="project" value="UniProtKB-KW"/>
</dbReference>
<dbReference type="GO" id="GO:0000049">
    <property type="term" value="F:tRNA binding"/>
    <property type="evidence" value="ECO:0007669"/>
    <property type="project" value="UniProtKB-KW"/>
</dbReference>
<dbReference type="GO" id="GO:0103016">
    <property type="term" value="F:tRNA-uridine 2-sulfurtransferase activity"/>
    <property type="evidence" value="ECO:0007669"/>
    <property type="project" value="UniProtKB-EC"/>
</dbReference>
<dbReference type="GO" id="GO:0002143">
    <property type="term" value="P:tRNA wobble position uridine thiolation"/>
    <property type="evidence" value="ECO:0007669"/>
    <property type="project" value="TreeGrafter"/>
</dbReference>
<dbReference type="CDD" id="cd01998">
    <property type="entry name" value="MnmA_TRMU-like"/>
    <property type="match status" value="1"/>
</dbReference>
<dbReference type="FunFam" id="3.40.50.620:FF:000057">
    <property type="entry name" value="tRNA-specific 2-thiouridylase MnmA"/>
    <property type="match status" value="1"/>
</dbReference>
<dbReference type="Gene3D" id="2.30.30.280">
    <property type="entry name" value="Adenine nucleotide alpha hydrolases-like domains"/>
    <property type="match status" value="1"/>
</dbReference>
<dbReference type="Gene3D" id="3.40.50.620">
    <property type="entry name" value="HUPs"/>
    <property type="match status" value="1"/>
</dbReference>
<dbReference type="Gene3D" id="2.40.30.10">
    <property type="entry name" value="Translation factors"/>
    <property type="match status" value="1"/>
</dbReference>
<dbReference type="HAMAP" id="MF_00144">
    <property type="entry name" value="tRNA_thiouridyl_MnmA"/>
    <property type="match status" value="1"/>
</dbReference>
<dbReference type="InterPro" id="IPR004506">
    <property type="entry name" value="MnmA-like"/>
</dbReference>
<dbReference type="InterPro" id="IPR046885">
    <property type="entry name" value="MnmA-like_C"/>
</dbReference>
<dbReference type="InterPro" id="IPR046884">
    <property type="entry name" value="MnmA-like_central"/>
</dbReference>
<dbReference type="InterPro" id="IPR023382">
    <property type="entry name" value="MnmA-like_central_sf"/>
</dbReference>
<dbReference type="InterPro" id="IPR014729">
    <property type="entry name" value="Rossmann-like_a/b/a_fold"/>
</dbReference>
<dbReference type="NCBIfam" id="NF001138">
    <property type="entry name" value="PRK00143.1"/>
    <property type="match status" value="1"/>
</dbReference>
<dbReference type="NCBIfam" id="TIGR00420">
    <property type="entry name" value="trmU"/>
    <property type="match status" value="1"/>
</dbReference>
<dbReference type="PANTHER" id="PTHR11933:SF5">
    <property type="entry name" value="MITOCHONDRIAL TRNA-SPECIFIC 2-THIOURIDYLASE 1"/>
    <property type="match status" value="1"/>
</dbReference>
<dbReference type="PANTHER" id="PTHR11933">
    <property type="entry name" value="TRNA 5-METHYLAMINOMETHYL-2-THIOURIDYLATE -METHYLTRANSFERASE"/>
    <property type="match status" value="1"/>
</dbReference>
<dbReference type="Pfam" id="PF03054">
    <property type="entry name" value="tRNA_Me_trans"/>
    <property type="match status" value="1"/>
</dbReference>
<dbReference type="Pfam" id="PF20258">
    <property type="entry name" value="tRNA_Me_trans_C"/>
    <property type="match status" value="1"/>
</dbReference>
<dbReference type="Pfam" id="PF20259">
    <property type="entry name" value="tRNA_Me_trans_M"/>
    <property type="match status" value="1"/>
</dbReference>
<dbReference type="SUPFAM" id="SSF52402">
    <property type="entry name" value="Adenine nucleotide alpha hydrolases-like"/>
    <property type="match status" value="1"/>
</dbReference>
<protein>
    <recommendedName>
        <fullName evidence="1">tRNA-specific 2-thiouridylase MnmA</fullName>
        <ecNumber evidence="1">2.8.1.13</ecNumber>
    </recommendedName>
</protein>
<accession>Q47SD2</accession>
<reference key="1">
    <citation type="journal article" date="2007" name="J. Bacteriol.">
        <title>Genome sequence and analysis of the soil cellulolytic actinomycete Thermobifida fusca YX.</title>
        <authorList>
            <person name="Lykidis A."/>
            <person name="Mavromatis K."/>
            <person name="Ivanova N."/>
            <person name="Anderson I."/>
            <person name="Land M."/>
            <person name="DiBartolo G."/>
            <person name="Martinez M."/>
            <person name="Lapidus A."/>
            <person name="Lucas S."/>
            <person name="Copeland A."/>
            <person name="Richardson P."/>
            <person name="Wilson D.B."/>
            <person name="Kyrpides N."/>
        </authorList>
    </citation>
    <scope>NUCLEOTIDE SEQUENCE [LARGE SCALE GENOMIC DNA]</scope>
    <source>
        <strain>YX</strain>
    </source>
</reference>
<name>MNMA_THEFY</name>
<comment type="function">
    <text evidence="1">Catalyzes the 2-thiolation of uridine at the wobble position (U34) of tRNA, leading to the formation of s(2)U34.</text>
</comment>
<comment type="catalytic activity">
    <reaction evidence="1">
        <text>S-sulfanyl-L-cysteinyl-[protein] + uridine(34) in tRNA + AH2 + ATP = 2-thiouridine(34) in tRNA + L-cysteinyl-[protein] + A + AMP + diphosphate + H(+)</text>
        <dbReference type="Rhea" id="RHEA:47032"/>
        <dbReference type="Rhea" id="RHEA-COMP:10131"/>
        <dbReference type="Rhea" id="RHEA-COMP:11726"/>
        <dbReference type="Rhea" id="RHEA-COMP:11727"/>
        <dbReference type="Rhea" id="RHEA-COMP:11728"/>
        <dbReference type="ChEBI" id="CHEBI:13193"/>
        <dbReference type="ChEBI" id="CHEBI:15378"/>
        <dbReference type="ChEBI" id="CHEBI:17499"/>
        <dbReference type="ChEBI" id="CHEBI:29950"/>
        <dbReference type="ChEBI" id="CHEBI:30616"/>
        <dbReference type="ChEBI" id="CHEBI:33019"/>
        <dbReference type="ChEBI" id="CHEBI:61963"/>
        <dbReference type="ChEBI" id="CHEBI:65315"/>
        <dbReference type="ChEBI" id="CHEBI:87170"/>
        <dbReference type="ChEBI" id="CHEBI:456215"/>
        <dbReference type="EC" id="2.8.1.13"/>
    </reaction>
</comment>
<comment type="subcellular location">
    <subcellularLocation>
        <location evidence="1">Cytoplasm</location>
    </subcellularLocation>
</comment>
<comment type="similarity">
    <text evidence="1">Belongs to the MnmA/TRMU family.</text>
</comment>
<gene>
    <name evidence="1" type="primary">mnmA</name>
    <name type="ordered locus">Tfu_0597</name>
</gene>
<sequence length="363" mass="39433">MTLRVLAAMSGGVDSAVAAARAVEAGYDVTGVHLALSSNPQSYRTGARGCCTIEDSRDARRAADVIGIPFYIWDMAEEFDRDVVQDFVAEYAAGRTPNPCLRCNEKIKFQAVLERALALGFDAVCTGHHVRLENGRLRRSVDAVKDQSYVLAVLTREQLAHAIFPLGDCTKEEVRAEAARRGLTVADKPDSHDICFIADGDTSGFLERRLGSNPGPIVDETGQVVGEHRGAHAFTVGQRRGLNLSGAPHRRYVLSIEPVSNTVRVGPREALQVDRIVGERPVWSGCEPPEEWTPFLVQLRAHGEVYSCRARQYEGRVEILLDEPALGVAKGQAAVLYDGDVVMGSSTIAETSRVEQAAANHAE</sequence>
<evidence type="ECO:0000255" key="1">
    <source>
        <dbReference type="HAMAP-Rule" id="MF_00144"/>
    </source>
</evidence>
<organism>
    <name type="scientific">Thermobifida fusca (strain YX)</name>
    <dbReference type="NCBI Taxonomy" id="269800"/>
    <lineage>
        <taxon>Bacteria</taxon>
        <taxon>Bacillati</taxon>
        <taxon>Actinomycetota</taxon>
        <taxon>Actinomycetes</taxon>
        <taxon>Streptosporangiales</taxon>
        <taxon>Nocardiopsidaceae</taxon>
        <taxon>Thermobifida</taxon>
    </lineage>
</organism>
<feature type="chain" id="PRO_0000349842" description="tRNA-specific 2-thiouridylase MnmA">
    <location>
        <begin position="1"/>
        <end position="363"/>
    </location>
</feature>
<feature type="region of interest" description="Interaction with tRNA" evidence="1">
    <location>
        <begin position="145"/>
        <end position="147"/>
    </location>
</feature>
<feature type="active site" description="Nucleophile" evidence="1">
    <location>
        <position position="103"/>
    </location>
</feature>
<feature type="active site" description="Cysteine persulfide intermediate" evidence="1">
    <location>
        <position position="195"/>
    </location>
</feature>
<feature type="binding site" evidence="1">
    <location>
        <begin position="8"/>
        <end position="15"/>
    </location>
    <ligand>
        <name>ATP</name>
        <dbReference type="ChEBI" id="CHEBI:30616"/>
    </ligand>
</feature>
<feature type="binding site" evidence="1">
    <location>
        <position position="34"/>
    </location>
    <ligand>
        <name>ATP</name>
        <dbReference type="ChEBI" id="CHEBI:30616"/>
    </ligand>
</feature>
<feature type="binding site" evidence="1">
    <location>
        <position position="127"/>
    </location>
    <ligand>
        <name>ATP</name>
        <dbReference type="ChEBI" id="CHEBI:30616"/>
    </ligand>
</feature>
<feature type="site" description="Interaction with tRNA" evidence="1">
    <location>
        <position position="128"/>
    </location>
</feature>
<feature type="site" description="Interaction with tRNA" evidence="1">
    <location>
        <position position="332"/>
    </location>
</feature>
<feature type="disulfide bond" description="Alternate" evidence="1">
    <location>
        <begin position="103"/>
        <end position="195"/>
    </location>
</feature>
<keyword id="KW-0067">ATP-binding</keyword>
<keyword id="KW-0963">Cytoplasm</keyword>
<keyword id="KW-1015">Disulfide bond</keyword>
<keyword id="KW-0547">Nucleotide-binding</keyword>
<keyword id="KW-0694">RNA-binding</keyword>
<keyword id="KW-0808">Transferase</keyword>
<keyword id="KW-0819">tRNA processing</keyword>
<keyword id="KW-0820">tRNA-binding</keyword>